<dbReference type="EC" id="2.7.7.-" evidence="1"/>
<dbReference type="EC" id="3.1.-.-" evidence="1"/>
<dbReference type="EMBL" id="X59553">
    <property type="protein sequence ID" value="CAA42131.1"/>
    <property type="molecule type" value="Genomic_DNA"/>
</dbReference>
<dbReference type="RefSeq" id="NP_958192.1">
    <property type="nucleotide sequence ID" value="NC_005344.1"/>
</dbReference>
<dbReference type="SMR" id="P37317"/>
<dbReference type="GeneID" id="2716620"/>
<dbReference type="KEGG" id="vg:2716620"/>
<dbReference type="OrthoDB" id="3050at10239"/>
<dbReference type="GO" id="GO:0003677">
    <property type="term" value="F:DNA binding"/>
    <property type="evidence" value="ECO:0007669"/>
    <property type="project" value="UniProtKB-KW"/>
</dbReference>
<dbReference type="GO" id="GO:0016787">
    <property type="term" value="F:hydrolase activity"/>
    <property type="evidence" value="ECO:0007669"/>
    <property type="project" value="UniProtKB-KW"/>
</dbReference>
<dbReference type="GO" id="GO:0016740">
    <property type="term" value="F:transferase activity"/>
    <property type="evidence" value="ECO:0007669"/>
    <property type="project" value="UniProtKB-KW"/>
</dbReference>
<dbReference type="GO" id="GO:0015074">
    <property type="term" value="P:DNA integration"/>
    <property type="evidence" value="ECO:0007669"/>
    <property type="project" value="UniProtKB-KW"/>
</dbReference>
<dbReference type="GO" id="GO:0006310">
    <property type="term" value="P:DNA recombination"/>
    <property type="evidence" value="ECO:0007669"/>
    <property type="project" value="UniProtKB-KW"/>
</dbReference>
<dbReference type="GO" id="GO:0075713">
    <property type="term" value="P:establishment of integrated proviral latency"/>
    <property type="evidence" value="ECO:0007669"/>
    <property type="project" value="UniProtKB-KW"/>
</dbReference>
<dbReference type="GO" id="GO:0046718">
    <property type="term" value="P:symbiont entry into host cell"/>
    <property type="evidence" value="ECO:0007669"/>
    <property type="project" value="UniProtKB-KW"/>
</dbReference>
<dbReference type="GO" id="GO:0044826">
    <property type="term" value="P:viral genome integration into host DNA"/>
    <property type="evidence" value="ECO:0007669"/>
    <property type="project" value="UniProtKB-KW"/>
</dbReference>
<dbReference type="CDD" id="cd00801">
    <property type="entry name" value="INT_P4_C"/>
    <property type="match status" value="1"/>
</dbReference>
<dbReference type="FunFam" id="1.10.150.130:FF:000005">
    <property type="entry name" value="Prophage integrase IntS"/>
    <property type="match status" value="1"/>
</dbReference>
<dbReference type="FunFam" id="1.10.443.10:FF:000006">
    <property type="entry name" value="Prophage integrase IntS"/>
    <property type="match status" value="1"/>
</dbReference>
<dbReference type="Gene3D" id="1.10.150.130">
    <property type="match status" value="1"/>
</dbReference>
<dbReference type="Gene3D" id="3.30.160.390">
    <property type="entry name" value="Integrase, DNA-binding domain"/>
    <property type="match status" value="1"/>
</dbReference>
<dbReference type="Gene3D" id="1.10.443.10">
    <property type="entry name" value="Intergrase catalytic core"/>
    <property type="match status" value="1"/>
</dbReference>
<dbReference type="InterPro" id="IPR044068">
    <property type="entry name" value="CB"/>
</dbReference>
<dbReference type="InterPro" id="IPR011010">
    <property type="entry name" value="DNA_brk_join_enz"/>
</dbReference>
<dbReference type="InterPro" id="IPR013762">
    <property type="entry name" value="Integrase-like_cat_sf"/>
</dbReference>
<dbReference type="InterPro" id="IPR002104">
    <property type="entry name" value="Integrase_catalytic"/>
</dbReference>
<dbReference type="InterPro" id="IPR038488">
    <property type="entry name" value="Integrase_DNA-bd_sf"/>
</dbReference>
<dbReference type="InterPro" id="IPR025166">
    <property type="entry name" value="Integrase_DNA_bind_dom"/>
</dbReference>
<dbReference type="InterPro" id="IPR010998">
    <property type="entry name" value="Integrase_recombinase_N"/>
</dbReference>
<dbReference type="InterPro" id="IPR053876">
    <property type="entry name" value="Phage_int_M"/>
</dbReference>
<dbReference type="InterPro" id="IPR050808">
    <property type="entry name" value="Phage_Integrase"/>
</dbReference>
<dbReference type="PANTHER" id="PTHR30629">
    <property type="entry name" value="PROPHAGE INTEGRASE"/>
    <property type="match status" value="1"/>
</dbReference>
<dbReference type="PANTHER" id="PTHR30629:SF2">
    <property type="entry name" value="PROPHAGE INTEGRASE INTS-RELATED"/>
    <property type="match status" value="1"/>
</dbReference>
<dbReference type="Pfam" id="PF13356">
    <property type="entry name" value="Arm-DNA-bind_3"/>
    <property type="match status" value="1"/>
</dbReference>
<dbReference type="Pfam" id="PF22022">
    <property type="entry name" value="Phage_int_M"/>
    <property type="match status" value="1"/>
</dbReference>
<dbReference type="Pfam" id="PF00589">
    <property type="entry name" value="Phage_integrase"/>
    <property type="match status" value="1"/>
</dbReference>
<dbReference type="SUPFAM" id="SSF56349">
    <property type="entry name" value="DNA breaking-rejoining enzymes"/>
    <property type="match status" value="1"/>
</dbReference>
<dbReference type="PROSITE" id="PS51900">
    <property type="entry name" value="CB"/>
    <property type="match status" value="1"/>
</dbReference>
<dbReference type="PROSITE" id="PS51898">
    <property type="entry name" value="TYR_RECOMBINASE"/>
    <property type="match status" value="1"/>
</dbReference>
<accession>P37317</accession>
<evidence type="ECO:0000250" key="1">
    <source>
        <dbReference type="UniProtKB" id="P36932"/>
    </source>
</evidence>
<evidence type="ECO:0000255" key="2">
    <source>
        <dbReference type="PROSITE-ProRule" id="PRU01246"/>
    </source>
</evidence>
<evidence type="ECO:0000255" key="3">
    <source>
        <dbReference type="PROSITE-ProRule" id="PRU01248"/>
    </source>
</evidence>
<evidence type="ECO:0000305" key="4"/>
<keyword id="KW-0229">DNA integration</keyword>
<keyword id="KW-0233">DNA recombination</keyword>
<keyword id="KW-0238">DNA-binding</keyword>
<keyword id="KW-0378">Hydrolase</keyword>
<keyword id="KW-0808">Transferase</keyword>
<keyword id="KW-1179">Viral genome integration</keyword>
<keyword id="KW-1160">Virus entry into host cell</keyword>
<proteinExistence type="inferred from homology"/>
<organism>
    <name type="scientific">Shigella phage Sf6</name>
    <name type="common">Shigella flexneri bacteriophage VI</name>
    <name type="synonym">Bacteriophage SfVI</name>
    <dbReference type="NCBI Taxonomy" id="10761"/>
    <lineage>
        <taxon>Viruses</taxon>
        <taxon>Duplodnaviria</taxon>
        <taxon>Heunggongvirae</taxon>
        <taxon>Uroviricota</taxon>
        <taxon>Caudoviricetes</taxon>
        <taxon>Lederbergvirus</taxon>
    </lineage>
</organism>
<gene>
    <name type="primary">int</name>
</gene>
<organismHost>
    <name type="scientific">Shigella flexneri</name>
    <dbReference type="NCBI Taxonomy" id="623"/>
</organismHost>
<reference key="1">
    <citation type="journal article" date="1991" name="Gene">
        <title>The oac gene encoding a lipopolysaccharide O-antigen acetylase maps adjacent to the integrase-encoding gene on the genome of Shigella flexneri bacteriophage Sf6.</title>
        <authorList>
            <person name="Clark C.A."/>
            <person name="Beltrame J."/>
            <person name="Manning P.A."/>
        </authorList>
    </citation>
    <scope>NUCLEOTIDE SEQUENCE [GENOMIC DNA]</scope>
</reference>
<sequence length="385" mass="44103">MLTVKQIEAAKPKEKPYRLLDGNGLYLYVPVSGKKVWQLRYKIDGKEKILTVGKYPLMTLQEARDKAWTARKDISVGIDPVKAKKASSNNNSFSAIYKEWYDHKKQVWSVGYATELAKMFDDDILPIIGGLEIQDIEPMQLLEVIRRFEDRGAMERANKARRRCGEVFRYAIVTGRAKYNPAPDLADAMKGYRKKNFPFLPADQIPAFNKALATFSGSIVSLIATKVLRYTALRTKELRSMQWKNVDFENRIITIDASVMKGRKIHVVPMSDQVIELLTTLSSITKPVSEFVFAGRNDKKKPICENAVLLVIKQIGYEGLESGHGFRHEFSTIMNEHEWPADAIEVQLAHANGGSVRGIYNHAQYLDKRREMMQWWADWLDEKVR</sequence>
<feature type="chain" id="PRO_0000197508" description="Integrase">
    <location>
        <begin position="1"/>
        <end position="385"/>
    </location>
</feature>
<feature type="domain" description="Core-binding (CB)" evidence="3">
    <location>
        <begin position="91"/>
        <end position="172"/>
    </location>
</feature>
<feature type="domain" description="Tyr recombinase" evidence="2">
    <location>
        <begin position="195"/>
        <end position="373"/>
    </location>
</feature>
<feature type="active site" evidence="2">
    <location>
        <position position="234"/>
    </location>
</feature>
<feature type="active site" evidence="2">
    <location>
        <position position="261"/>
    </location>
</feature>
<feature type="active site" evidence="2">
    <location>
        <position position="324"/>
    </location>
</feature>
<feature type="active site" evidence="2">
    <location>
        <position position="327"/>
    </location>
</feature>
<feature type="active site" evidence="2">
    <location>
        <position position="350"/>
    </location>
</feature>
<feature type="active site" description="O-(3'-phospho-DNA)-tyrosine intermediate" evidence="2">
    <location>
        <position position="360"/>
    </location>
</feature>
<comment type="function">
    <text>Integrase is necessary for integration of the phage into the host genome by site-specific recombination. In conjunction with excisionase, integrase is also necessary for excision of the prophage from the host genome.</text>
</comment>
<comment type="similarity">
    <text evidence="4">Belongs to the 'phage' integrase family.</text>
</comment>
<name>VINT_BPSFV</name>
<protein>
    <recommendedName>
        <fullName>Integrase</fullName>
        <ecNumber evidence="1">2.7.7.-</ecNumber>
        <ecNumber evidence="1">3.1.-.-</ecNumber>
    </recommendedName>
</protein>